<reference key="1">
    <citation type="submission" date="2008-12" db="EMBL/GenBank/DDBJ databases">
        <title>Complete sequence of chromosome of Methylobacterium chloromethanicum CM4.</title>
        <authorList>
            <consortium name="US DOE Joint Genome Institute"/>
            <person name="Lucas S."/>
            <person name="Copeland A."/>
            <person name="Lapidus A."/>
            <person name="Glavina del Rio T."/>
            <person name="Dalin E."/>
            <person name="Tice H."/>
            <person name="Bruce D."/>
            <person name="Goodwin L."/>
            <person name="Pitluck S."/>
            <person name="Chertkov O."/>
            <person name="Brettin T."/>
            <person name="Detter J.C."/>
            <person name="Han C."/>
            <person name="Larimer F."/>
            <person name="Land M."/>
            <person name="Hauser L."/>
            <person name="Kyrpides N."/>
            <person name="Mikhailova N."/>
            <person name="Marx C."/>
            <person name="Richardson P."/>
        </authorList>
    </citation>
    <scope>NUCLEOTIDE SEQUENCE [LARGE SCALE GENOMIC DNA]</scope>
    <source>
        <strain>CM4 / NCIMB 13688</strain>
    </source>
</reference>
<dbReference type="EMBL" id="CP001298">
    <property type="protein sequence ID" value="ACK83284.1"/>
    <property type="molecule type" value="Genomic_DNA"/>
</dbReference>
<dbReference type="RefSeq" id="WP_003597094.1">
    <property type="nucleotide sequence ID" value="NC_011757.1"/>
</dbReference>
<dbReference type="SMR" id="B7L0R3"/>
<dbReference type="GeneID" id="72989852"/>
<dbReference type="KEGG" id="mch:Mchl_2442"/>
<dbReference type="HOGENOM" id="CLU_037562_3_1_5"/>
<dbReference type="Proteomes" id="UP000002385">
    <property type="component" value="Chromosome"/>
</dbReference>
<dbReference type="GO" id="GO:1990904">
    <property type="term" value="C:ribonucleoprotein complex"/>
    <property type="evidence" value="ECO:0007669"/>
    <property type="project" value="UniProtKB-KW"/>
</dbReference>
<dbReference type="GO" id="GO:0005840">
    <property type="term" value="C:ribosome"/>
    <property type="evidence" value="ECO:0007669"/>
    <property type="project" value="UniProtKB-KW"/>
</dbReference>
<dbReference type="GO" id="GO:0019843">
    <property type="term" value="F:rRNA binding"/>
    <property type="evidence" value="ECO:0007669"/>
    <property type="project" value="UniProtKB-UniRule"/>
</dbReference>
<dbReference type="GO" id="GO:0003735">
    <property type="term" value="F:structural constituent of ribosome"/>
    <property type="evidence" value="ECO:0007669"/>
    <property type="project" value="InterPro"/>
</dbReference>
<dbReference type="GO" id="GO:0006412">
    <property type="term" value="P:translation"/>
    <property type="evidence" value="ECO:0007669"/>
    <property type="project" value="UniProtKB-UniRule"/>
</dbReference>
<dbReference type="FunFam" id="3.30.70.330:FF:000001">
    <property type="entry name" value="50S ribosomal protein L23"/>
    <property type="match status" value="1"/>
</dbReference>
<dbReference type="Gene3D" id="3.30.70.330">
    <property type="match status" value="1"/>
</dbReference>
<dbReference type="HAMAP" id="MF_01369_B">
    <property type="entry name" value="Ribosomal_uL23_B"/>
    <property type="match status" value="1"/>
</dbReference>
<dbReference type="InterPro" id="IPR012677">
    <property type="entry name" value="Nucleotide-bd_a/b_plait_sf"/>
</dbReference>
<dbReference type="InterPro" id="IPR013025">
    <property type="entry name" value="Ribosomal_uL23-like"/>
</dbReference>
<dbReference type="InterPro" id="IPR012678">
    <property type="entry name" value="Ribosomal_uL23/eL15/eS24_sf"/>
</dbReference>
<dbReference type="InterPro" id="IPR001014">
    <property type="entry name" value="Ribosomal_uL23_CS"/>
</dbReference>
<dbReference type="NCBIfam" id="NF004359">
    <property type="entry name" value="PRK05738.1-3"/>
    <property type="match status" value="1"/>
</dbReference>
<dbReference type="NCBIfam" id="NF004360">
    <property type="entry name" value="PRK05738.1-5"/>
    <property type="match status" value="1"/>
</dbReference>
<dbReference type="NCBIfam" id="NF004363">
    <property type="entry name" value="PRK05738.2-4"/>
    <property type="match status" value="1"/>
</dbReference>
<dbReference type="NCBIfam" id="NF004366">
    <property type="entry name" value="PRK05738.3-2"/>
    <property type="match status" value="1"/>
</dbReference>
<dbReference type="PANTHER" id="PTHR11620">
    <property type="entry name" value="60S RIBOSOMAL PROTEIN L23A"/>
    <property type="match status" value="1"/>
</dbReference>
<dbReference type="Pfam" id="PF00276">
    <property type="entry name" value="Ribosomal_L23"/>
    <property type="match status" value="1"/>
</dbReference>
<dbReference type="SUPFAM" id="SSF54189">
    <property type="entry name" value="Ribosomal proteins S24e, L23 and L15e"/>
    <property type="match status" value="1"/>
</dbReference>
<dbReference type="PROSITE" id="PS00050">
    <property type="entry name" value="RIBOSOMAL_L23"/>
    <property type="match status" value="1"/>
</dbReference>
<keyword id="KW-0687">Ribonucleoprotein</keyword>
<keyword id="KW-0689">Ribosomal protein</keyword>
<keyword id="KW-0694">RNA-binding</keyword>
<keyword id="KW-0699">rRNA-binding</keyword>
<proteinExistence type="inferred from homology"/>
<accession>B7L0R3</accession>
<organism>
    <name type="scientific">Methylorubrum extorquens (strain CM4 / NCIMB 13688)</name>
    <name type="common">Methylobacterium extorquens</name>
    <dbReference type="NCBI Taxonomy" id="440085"/>
    <lineage>
        <taxon>Bacteria</taxon>
        <taxon>Pseudomonadati</taxon>
        <taxon>Pseudomonadota</taxon>
        <taxon>Alphaproteobacteria</taxon>
        <taxon>Hyphomicrobiales</taxon>
        <taxon>Methylobacteriaceae</taxon>
        <taxon>Methylorubrum</taxon>
    </lineage>
</organism>
<gene>
    <name evidence="1" type="primary">rplW</name>
    <name type="ordered locus">Mchl_2442</name>
</gene>
<protein>
    <recommendedName>
        <fullName evidence="1">Large ribosomal subunit protein uL23</fullName>
    </recommendedName>
    <alternativeName>
        <fullName evidence="2">50S ribosomal protein L23</fullName>
    </alternativeName>
</protein>
<sequence>MSADPRHYDIIVSPVITEKATNLTEQNKVVFRVAPKATKPQIKEAVERLFDVKVTGVNTLTTKGKKKFFRGQRGQRSDVKKAIVTLAEGDTIDVTTGL</sequence>
<comment type="function">
    <text evidence="1">One of the early assembly proteins it binds 23S rRNA. One of the proteins that surrounds the polypeptide exit tunnel on the outside of the ribosome. Forms the main docking site for trigger factor binding to the ribosome.</text>
</comment>
<comment type="subunit">
    <text evidence="1">Part of the 50S ribosomal subunit. Contacts protein L29, and trigger factor when it is bound to the ribosome.</text>
</comment>
<comment type="similarity">
    <text evidence="1">Belongs to the universal ribosomal protein uL23 family.</text>
</comment>
<name>RL23_METC4</name>
<feature type="chain" id="PRO_1000184092" description="Large ribosomal subunit protein uL23">
    <location>
        <begin position="1"/>
        <end position="98"/>
    </location>
</feature>
<evidence type="ECO:0000255" key="1">
    <source>
        <dbReference type="HAMAP-Rule" id="MF_01369"/>
    </source>
</evidence>
<evidence type="ECO:0000305" key="2"/>